<feature type="chain" id="PRO_1000068999" description="L-lactate dehydrogenase">
    <location>
        <begin position="1"/>
        <end position="381"/>
    </location>
</feature>
<feature type="domain" description="FMN hydroxy acid dehydrogenase" evidence="1">
    <location>
        <begin position="1"/>
        <end position="380"/>
    </location>
</feature>
<feature type="active site" description="Proton acceptor" evidence="1">
    <location>
        <position position="275"/>
    </location>
</feature>
<feature type="binding site" evidence="1">
    <location>
        <position position="24"/>
    </location>
    <ligand>
        <name>substrate</name>
    </ligand>
</feature>
<feature type="binding site" evidence="1">
    <location>
        <position position="106"/>
    </location>
    <ligand>
        <name>FMN</name>
        <dbReference type="ChEBI" id="CHEBI:58210"/>
    </ligand>
</feature>
<feature type="binding site" evidence="1">
    <location>
        <position position="127"/>
    </location>
    <ligand>
        <name>FMN</name>
        <dbReference type="ChEBI" id="CHEBI:58210"/>
    </ligand>
</feature>
<feature type="binding site" evidence="1">
    <location>
        <position position="129"/>
    </location>
    <ligand>
        <name>substrate</name>
    </ligand>
</feature>
<feature type="binding site" evidence="1">
    <location>
        <position position="155"/>
    </location>
    <ligand>
        <name>FMN</name>
        <dbReference type="ChEBI" id="CHEBI:58210"/>
    </ligand>
</feature>
<feature type="binding site" evidence="1">
    <location>
        <position position="164"/>
    </location>
    <ligand>
        <name>substrate</name>
    </ligand>
</feature>
<feature type="binding site" evidence="1">
    <location>
        <position position="251"/>
    </location>
    <ligand>
        <name>FMN</name>
        <dbReference type="ChEBI" id="CHEBI:58210"/>
    </ligand>
</feature>
<feature type="binding site" evidence="1">
    <location>
        <position position="278"/>
    </location>
    <ligand>
        <name>substrate</name>
    </ligand>
</feature>
<feature type="binding site" evidence="1">
    <location>
        <begin position="306"/>
        <end position="330"/>
    </location>
    <ligand>
        <name>FMN</name>
        <dbReference type="ChEBI" id="CHEBI:58210"/>
    </ligand>
</feature>
<comment type="function">
    <text evidence="1">Catalyzes the conversion of L-lactate to pyruvate. Is coupled to the respiratory chain.</text>
</comment>
<comment type="catalytic activity">
    <reaction evidence="1">
        <text>(S)-lactate + A = pyruvate + AH2</text>
        <dbReference type="Rhea" id="RHEA:45816"/>
        <dbReference type="ChEBI" id="CHEBI:13193"/>
        <dbReference type="ChEBI" id="CHEBI:15361"/>
        <dbReference type="ChEBI" id="CHEBI:16651"/>
        <dbReference type="ChEBI" id="CHEBI:17499"/>
    </reaction>
</comment>
<comment type="cofactor">
    <cofactor evidence="1">
        <name>FMN</name>
        <dbReference type="ChEBI" id="CHEBI:58210"/>
    </cofactor>
</comment>
<comment type="subcellular location">
    <subcellularLocation>
        <location evidence="1">Cell inner membrane</location>
        <topology evidence="1">Peripheral membrane protein</topology>
    </subcellularLocation>
</comment>
<comment type="similarity">
    <text evidence="1">Belongs to the FMN-dependent alpha-hydroxy acid dehydrogenase family.</text>
</comment>
<dbReference type="EC" id="1.1.-.-" evidence="1"/>
<dbReference type="EMBL" id="CP000668">
    <property type="protein sequence ID" value="ABP39796.1"/>
    <property type="molecule type" value="Genomic_DNA"/>
</dbReference>
<dbReference type="RefSeq" id="WP_002211919.1">
    <property type="nucleotide sequence ID" value="NZ_CP009715.1"/>
</dbReference>
<dbReference type="SMR" id="A4TKI4"/>
<dbReference type="GeneID" id="57977002"/>
<dbReference type="KEGG" id="ypp:YPDSF_1407"/>
<dbReference type="PATRIC" id="fig|386656.14.peg.2384"/>
<dbReference type="GO" id="GO:0005886">
    <property type="term" value="C:plasma membrane"/>
    <property type="evidence" value="ECO:0007669"/>
    <property type="project" value="UniProtKB-SubCell"/>
</dbReference>
<dbReference type="GO" id="GO:0010181">
    <property type="term" value="F:FMN binding"/>
    <property type="evidence" value="ECO:0007669"/>
    <property type="project" value="InterPro"/>
</dbReference>
<dbReference type="GO" id="GO:0004459">
    <property type="term" value="F:L-lactate dehydrogenase activity"/>
    <property type="evidence" value="ECO:0007669"/>
    <property type="project" value="UniProtKB-UniRule"/>
</dbReference>
<dbReference type="GO" id="GO:0009060">
    <property type="term" value="P:aerobic respiration"/>
    <property type="evidence" value="ECO:0007669"/>
    <property type="project" value="TreeGrafter"/>
</dbReference>
<dbReference type="GO" id="GO:0006089">
    <property type="term" value="P:lactate metabolic process"/>
    <property type="evidence" value="ECO:0007669"/>
    <property type="project" value="UniProtKB-UniRule"/>
</dbReference>
<dbReference type="CDD" id="cd02809">
    <property type="entry name" value="alpha_hydroxyacid_oxid_FMN"/>
    <property type="match status" value="1"/>
</dbReference>
<dbReference type="FunFam" id="3.20.20.70:FF:000029">
    <property type="entry name" value="L-lactate dehydrogenase"/>
    <property type="match status" value="1"/>
</dbReference>
<dbReference type="Gene3D" id="3.20.20.70">
    <property type="entry name" value="Aldolase class I"/>
    <property type="match status" value="1"/>
</dbReference>
<dbReference type="HAMAP" id="MF_01559">
    <property type="entry name" value="L_lact_dehydr"/>
    <property type="match status" value="1"/>
</dbReference>
<dbReference type="InterPro" id="IPR013785">
    <property type="entry name" value="Aldolase_TIM"/>
</dbReference>
<dbReference type="InterPro" id="IPR012133">
    <property type="entry name" value="Alpha-hydoxy_acid_DH_FMN"/>
</dbReference>
<dbReference type="InterPro" id="IPR000262">
    <property type="entry name" value="FMN-dep_DH"/>
</dbReference>
<dbReference type="InterPro" id="IPR037396">
    <property type="entry name" value="FMN_HAD"/>
</dbReference>
<dbReference type="InterPro" id="IPR008259">
    <property type="entry name" value="FMN_hydac_DH_AS"/>
</dbReference>
<dbReference type="InterPro" id="IPR020920">
    <property type="entry name" value="LldD"/>
</dbReference>
<dbReference type="NCBIfam" id="NF033901">
    <property type="entry name" value="L_lactate_LldD"/>
    <property type="match status" value="1"/>
</dbReference>
<dbReference type="NCBIfam" id="NF008398">
    <property type="entry name" value="PRK11197.1"/>
    <property type="match status" value="1"/>
</dbReference>
<dbReference type="PANTHER" id="PTHR10578:SF85">
    <property type="entry name" value="L-LACTATE DEHYDROGENASE"/>
    <property type="match status" value="1"/>
</dbReference>
<dbReference type="PANTHER" id="PTHR10578">
    <property type="entry name" value="S -2-HYDROXY-ACID OXIDASE-RELATED"/>
    <property type="match status" value="1"/>
</dbReference>
<dbReference type="Pfam" id="PF01070">
    <property type="entry name" value="FMN_dh"/>
    <property type="match status" value="1"/>
</dbReference>
<dbReference type="PIRSF" id="PIRSF000138">
    <property type="entry name" value="Al-hdrx_acd_dh"/>
    <property type="match status" value="1"/>
</dbReference>
<dbReference type="SUPFAM" id="SSF51395">
    <property type="entry name" value="FMN-linked oxidoreductases"/>
    <property type="match status" value="1"/>
</dbReference>
<dbReference type="PROSITE" id="PS00557">
    <property type="entry name" value="FMN_HYDROXY_ACID_DH_1"/>
    <property type="match status" value="1"/>
</dbReference>
<dbReference type="PROSITE" id="PS51349">
    <property type="entry name" value="FMN_HYDROXY_ACID_DH_2"/>
    <property type="match status" value="1"/>
</dbReference>
<gene>
    <name evidence="1" type="primary">lldD</name>
    <name type="ordered locus">YPDSF_1407</name>
</gene>
<reference key="1">
    <citation type="submission" date="2007-02" db="EMBL/GenBank/DDBJ databases">
        <title>Complete sequence of chromosome of Yersinia pestis Pestoides F.</title>
        <authorList>
            <consortium name="US DOE Joint Genome Institute"/>
            <person name="Copeland A."/>
            <person name="Lucas S."/>
            <person name="Lapidus A."/>
            <person name="Barry K."/>
            <person name="Detter J.C."/>
            <person name="Glavina del Rio T."/>
            <person name="Hammon N."/>
            <person name="Israni S."/>
            <person name="Dalin E."/>
            <person name="Tice H."/>
            <person name="Pitluck S."/>
            <person name="Di Bartolo G."/>
            <person name="Chain P."/>
            <person name="Malfatti S."/>
            <person name="Shin M."/>
            <person name="Vergez L."/>
            <person name="Schmutz J."/>
            <person name="Larimer F."/>
            <person name="Land M."/>
            <person name="Hauser L."/>
            <person name="Worsham P."/>
            <person name="Chu M."/>
            <person name="Bearden S."/>
            <person name="Garcia E."/>
            <person name="Richardson P."/>
        </authorList>
    </citation>
    <scope>NUCLEOTIDE SEQUENCE [LARGE SCALE GENOMIC DNA]</scope>
    <source>
        <strain>Pestoides F</strain>
    </source>
</reference>
<name>LLDD_YERPP</name>
<sequence length="381" mass="41259">MIISASTDYRAAAQRKLPPFLFHYIDGGAYNEQTLRRNTADLADIALRQRVLKNMSELSLETQLFGETQAMPVVLGPVGLSGMYARRGEVQAARAADKKGIPFTLSTLSVCPIEEVAPAIARPMWFQLYVLKDRGFMRNALTRAQAAGVKTLVFTVDMPVPGARYRDAHSGMSGPNAAARRLLQAIAHPQWAWDVGLNGKPHDLGNISAYLGKPTTLEDYMGWIATNFDPSISWKDLEWVREFWQGPMIIKGILDPEDAKDAVKFGADGIVVSNHGGRQLDGVLSTARALPAIADAVKGDITILADSGIRTGLDVVRMIALGADSVLLGRAFVYALATAGEAGVINLLTLIEQEMRVAMTLTGAKRIADINRDSLAVSERG</sequence>
<evidence type="ECO:0000255" key="1">
    <source>
        <dbReference type="HAMAP-Rule" id="MF_01559"/>
    </source>
</evidence>
<protein>
    <recommendedName>
        <fullName evidence="1">L-lactate dehydrogenase</fullName>
        <ecNumber evidence="1">1.1.-.-</ecNumber>
    </recommendedName>
</protein>
<proteinExistence type="inferred from homology"/>
<accession>A4TKI4</accession>
<keyword id="KW-0997">Cell inner membrane</keyword>
<keyword id="KW-1003">Cell membrane</keyword>
<keyword id="KW-0285">Flavoprotein</keyword>
<keyword id="KW-0288">FMN</keyword>
<keyword id="KW-0472">Membrane</keyword>
<keyword id="KW-0560">Oxidoreductase</keyword>
<organism>
    <name type="scientific">Yersinia pestis (strain Pestoides F)</name>
    <dbReference type="NCBI Taxonomy" id="386656"/>
    <lineage>
        <taxon>Bacteria</taxon>
        <taxon>Pseudomonadati</taxon>
        <taxon>Pseudomonadota</taxon>
        <taxon>Gammaproteobacteria</taxon>
        <taxon>Enterobacterales</taxon>
        <taxon>Yersiniaceae</taxon>
        <taxon>Yersinia</taxon>
    </lineage>
</organism>